<proteinExistence type="inferred from homology"/>
<accession>Q6NCU3</accession>
<name>PIMT_RHOPA</name>
<dbReference type="EC" id="2.1.1.77" evidence="1"/>
<dbReference type="EMBL" id="BX572594">
    <property type="protein sequence ID" value="CAE25820.1"/>
    <property type="status" value="ALT_INIT"/>
    <property type="molecule type" value="Genomic_DNA"/>
</dbReference>
<dbReference type="RefSeq" id="WP_011155944.1">
    <property type="nucleotide sequence ID" value="NZ_CP116810.1"/>
</dbReference>
<dbReference type="SMR" id="Q6NCU3"/>
<dbReference type="STRING" id="258594.RPA0376"/>
<dbReference type="eggNOG" id="COG2518">
    <property type="taxonomic scope" value="Bacteria"/>
</dbReference>
<dbReference type="HOGENOM" id="CLU_055432_2_0_5"/>
<dbReference type="PhylomeDB" id="Q6NCU3"/>
<dbReference type="GO" id="GO:0005737">
    <property type="term" value="C:cytoplasm"/>
    <property type="evidence" value="ECO:0007669"/>
    <property type="project" value="UniProtKB-SubCell"/>
</dbReference>
<dbReference type="GO" id="GO:0004719">
    <property type="term" value="F:protein-L-isoaspartate (D-aspartate) O-methyltransferase activity"/>
    <property type="evidence" value="ECO:0007669"/>
    <property type="project" value="UniProtKB-UniRule"/>
</dbReference>
<dbReference type="GO" id="GO:0032259">
    <property type="term" value="P:methylation"/>
    <property type="evidence" value="ECO:0007669"/>
    <property type="project" value="UniProtKB-KW"/>
</dbReference>
<dbReference type="GO" id="GO:0036211">
    <property type="term" value="P:protein modification process"/>
    <property type="evidence" value="ECO:0007669"/>
    <property type="project" value="UniProtKB-UniRule"/>
</dbReference>
<dbReference type="GO" id="GO:0030091">
    <property type="term" value="P:protein repair"/>
    <property type="evidence" value="ECO:0007669"/>
    <property type="project" value="UniProtKB-UniRule"/>
</dbReference>
<dbReference type="CDD" id="cd02440">
    <property type="entry name" value="AdoMet_MTases"/>
    <property type="match status" value="1"/>
</dbReference>
<dbReference type="FunFam" id="3.40.50.150:FF:000010">
    <property type="entry name" value="Protein-L-isoaspartate O-methyltransferase"/>
    <property type="match status" value="1"/>
</dbReference>
<dbReference type="Gene3D" id="3.40.50.150">
    <property type="entry name" value="Vaccinia Virus protein VP39"/>
    <property type="match status" value="1"/>
</dbReference>
<dbReference type="HAMAP" id="MF_00090">
    <property type="entry name" value="PIMT"/>
    <property type="match status" value="1"/>
</dbReference>
<dbReference type="InterPro" id="IPR000682">
    <property type="entry name" value="PCMT"/>
</dbReference>
<dbReference type="InterPro" id="IPR029063">
    <property type="entry name" value="SAM-dependent_MTases_sf"/>
</dbReference>
<dbReference type="NCBIfam" id="TIGR00080">
    <property type="entry name" value="pimt"/>
    <property type="match status" value="1"/>
</dbReference>
<dbReference type="NCBIfam" id="NF001453">
    <property type="entry name" value="PRK00312.1"/>
    <property type="match status" value="1"/>
</dbReference>
<dbReference type="PANTHER" id="PTHR11579">
    <property type="entry name" value="PROTEIN-L-ISOASPARTATE O-METHYLTRANSFERASE"/>
    <property type="match status" value="1"/>
</dbReference>
<dbReference type="PANTHER" id="PTHR11579:SF0">
    <property type="entry name" value="PROTEIN-L-ISOASPARTATE(D-ASPARTATE) O-METHYLTRANSFERASE"/>
    <property type="match status" value="1"/>
</dbReference>
<dbReference type="Pfam" id="PF01135">
    <property type="entry name" value="PCMT"/>
    <property type="match status" value="1"/>
</dbReference>
<dbReference type="SUPFAM" id="SSF53335">
    <property type="entry name" value="S-adenosyl-L-methionine-dependent methyltransferases"/>
    <property type="match status" value="1"/>
</dbReference>
<dbReference type="PROSITE" id="PS01279">
    <property type="entry name" value="PCMT"/>
    <property type="match status" value="1"/>
</dbReference>
<comment type="function">
    <text evidence="1">Catalyzes the methyl esterification of L-isoaspartyl residues in peptides and proteins that result from spontaneous decomposition of normal L-aspartyl and L-asparaginyl residues. It plays a role in the repair and/or degradation of damaged proteins.</text>
</comment>
<comment type="catalytic activity">
    <reaction evidence="1">
        <text>[protein]-L-isoaspartate + S-adenosyl-L-methionine = [protein]-L-isoaspartate alpha-methyl ester + S-adenosyl-L-homocysteine</text>
        <dbReference type="Rhea" id="RHEA:12705"/>
        <dbReference type="Rhea" id="RHEA-COMP:12143"/>
        <dbReference type="Rhea" id="RHEA-COMP:12144"/>
        <dbReference type="ChEBI" id="CHEBI:57856"/>
        <dbReference type="ChEBI" id="CHEBI:59789"/>
        <dbReference type="ChEBI" id="CHEBI:90596"/>
        <dbReference type="ChEBI" id="CHEBI:90598"/>
        <dbReference type="EC" id="2.1.1.77"/>
    </reaction>
</comment>
<comment type="subcellular location">
    <subcellularLocation>
        <location evidence="1">Cytoplasm</location>
    </subcellularLocation>
</comment>
<comment type="similarity">
    <text evidence="1">Belongs to the methyltransferase superfamily. L-isoaspartyl/D-aspartyl protein methyltransferase family.</text>
</comment>
<comment type="sequence caution" evidence="2">
    <conflict type="erroneous initiation">
        <sequence resource="EMBL-CDS" id="CAE25820"/>
    </conflict>
</comment>
<sequence length="218" mass="23128">MVERQIAARGVHDPRVLAAMRKVPREAFLPEPMRDLAYEDAPVPIAAEQTMSQPYIVALMVEALLLQGSDNVLEIGAGSGYAAAVLGEIAGHVTTVERIATLADAAAAKLAELGYGDVDVHRSDGTRGWPAAAPYDAIVVAAGGPQVPESLKAQLKIGGRLVMPVGADQQAQELVRLTRLGEADFKREHLGDVRFVPLLGAEGWQQPEPAGRTAREKG</sequence>
<gene>
    <name evidence="1" type="primary">pcm</name>
    <name type="ordered locus">RPA0376</name>
</gene>
<reference key="1">
    <citation type="journal article" date="2004" name="Nat. Biotechnol.">
        <title>Complete genome sequence of the metabolically versatile photosynthetic bacterium Rhodopseudomonas palustris.</title>
        <authorList>
            <person name="Larimer F.W."/>
            <person name="Chain P."/>
            <person name="Hauser L."/>
            <person name="Lamerdin J.E."/>
            <person name="Malfatti S."/>
            <person name="Do L."/>
            <person name="Land M.L."/>
            <person name="Pelletier D.A."/>
            <person name="Beatty J.T."/>
            <person name="Lang A.S."/>
            <person name="Tabita F.R."/>
            <person name="Gibson J.L."/>
            <person name="Hanson T.E."/>
            <person name="Bobst C."/>
            <person name="Torres y Torres J.L."/>
            <person name="Peres C."/>
            <person name="Harrison F.H."/>
            <person name="Gibson J."/>
            <person name="Harwood C.S."/>
        </authorList>
    </citation>
    <scope>NUCLEOTIDE SEQUENCE [LARGE SCALE GENOMIC DNA]</scope>
    <source>
        <strain>ATCC BAA-98 / CGA009</strain>
    </source>
</reference>
<feature type="chain" id="PRO_0000111901" description="Protein-L-isoaspartate O-methyltransferase">
    <location>
        <begin position="1"/>
        <end position="218"/>
    </location>
</feature>
<feature type="active site" evidence="1">
    <location>
        <position position="52"/>
    </location>
</feature>
<protein>
    <recommendedName>
        <fullName evidence="1">Protein-L-isoaspartate O-methyltransferase</fullName>
        <ecNumber evidence="1">2.1.1.77</ecNumber>
    </recommendedName>
    <alternativeName>
        <fullName evidence="1">L-isoaspartyl protein carboxyl methyltransferase</fullName>
    </alternativeName>
    <alternativeName>
        <fullName evidence="1">Protein L-isoaspartyl methyltransferase</fullName>
    </alternativeName>
    <alternativeName>
        <fullName evidence="1">Protein-beta-aspartate methyltransferase</fullName>
        <shortName evidence="1">PIMT</shortName>
    </alternativeName>
</protein>
<keyword id="KW-0963">Cytoplasm</keyword>
<keyword id="KW-0489">Methyltransferase</keyword>
<keyword id="KW-0949">S-adenosyl-L-methionine</keyword>
<keyword id="KW-0808">Transferase</keyword>
<organism>
    <name type="scientific">Rhodopseudomonas palustris (strain ATCC BAA-98 / CGA009)</name>
    <dbReference type="NCBI Taxonomy" id="258594"/>
    <lineage>
        <taxon>Bacteria</taxon>
        <taxon>Pseudomonadati</taxon>
        <taxon>Pseudomonadota</taxon>
        <taxon>Alphaproteobacteria</taxon>
        <taxon>Hyphomicrobiales</taxon>
        <taxon>Nitrobacteraceae</taxon>
        <taxon>Rhodopseudomonas</taxon>
    </lineage>
</organism>
<evidence type="ECO:0000255" key="1">
    <source>
        <dbReference type="HAMAP-Rule" id="MF_00090"/>
    </source>
</evidence>
<evidence type="ECO:0000305" key="2"/>